<name>LST2_MOUSE</name>
<feature type="chain" id="PRO_0000378953" description="Lateral signaling target protein 2 homolog">
    <location>
        <begin position="1"/>
        <end position="905"/>
    </location>
</feature>
<feature type="zinc finger region" description="FYVE-type" evidence="3">
    <location>
        <begin position="835"/>
        <end position="895"/>
    </location>
</feature>
<feature type="region of interest" description="Disordered" evidence="4">
    <location>
        <begin position="354"/>
        <end position="441"/>
    </location>
</feature>
<feature type="region of interest" description="Disordered" evidence="4">
    <location>
        <begin position="516"/>
        <end position="552"/>
    </location>
</feature>
<feature type="region of interest" description="Disordered" evidence="4">
    <location>
        <begin position="589"/>
        <end position="691"/>
    </location>
</feature>
<feature type="compositionally biased region" description="Polar residues" evidence="4">
    <location>
        <begin position="358"/>
        <end position="367"/>
    </location>
</feature>
<feature type="compositionally biased region" description="Polar residues" evidence="4">
    <location>
        <begin position="418"/>
        <end position="437"/>
    </location>
</feature>
<feature type="compositionally biased region" description="Basic and acidic residues" evidence="4">
    <location>
        <begin position="542"/>
        <end position="552"/>
    </location>
</feature>
<feature type="compositionally biased region" description="Basic and acidic residues" evidence="4">
    <location>
        <begin position="605"/>
        <end position="615"/>
    </location>
</feature>
<feature type="compositionally biased region" description="Polar residues" evidence="4">
    <location>
        <begin position="647"/>
        <end position="656"/>
    </location>
</feature>
<feature type="compositionally biased region" description="Basic and acidic residues" evidence="4">
    <location>
        <begin position="659"/>
        <end position="678"/>
    </location>
</feature>
<feature type="binding site" evidence="3">
    <location>
        <position position="841"/>
    </location>
    <ligand>
        <name>Zn(2+)</name>
        <dbReference type="ChEBI" id="CHEBI:29105"/>
        <label>1</label>
    </ligand>
</feature>
<feature type="binding site" evidence="3">
    <location>
        <position position="844"/>
    </location>
    <ligand>
        <name>Zn(2+)</name>
        <dbReference type="ChEBI" id="CHEBI:29105"/>
        <label>1</label>
    </ligand>
</feature>
<feature type="binding site" evidence="3">
    <location>
        <position position="857"/>
    </location>
    <ligand>
        <name>Zn(2+)</name>
        <dbReference type="ChEBI" id="CHEBI:29105"/>
        <label>2</label>
    </ligand>
</feature>
<feature type="binding site" evidence="3">
    <location>
        <position position="860"/>
    </location>
    <ligand>
        <name>Zn(2+)</name>
        <dbReference type="ChEBI" id="CHEBI:29105"/>
        <label>2</label>
    </ligand>
</feature>
<feature type="binding site" evidence="3">
    <location>
        <position position="865"/>
    </location>
    <ligand>
        <name>Zn(2+)</name>
        <dbReference type="ChEBI" id="CHEBI:29105"/>
        <label>1</label>
    </ligand>
</feature>
<feature type="binding site" evidence="3">
    <location>
        <position position="868"/>
    </location>
    <ligand>
        <name>Zn(2+)</name>
        <dbReference type="ChEBI" id="CHEBI:29105"/>
        <label>1</label>
    </ligand>
</feature>
<feature type="binding site" evidence="3">
    <location>
        <position position="887"/>
    </location>
    <ligand>
        <name>Zn(2+)</name>
        <dbReference type="ChEBI" id="CHEBI:29105"/>
        <label>2</label>
    </ligand>
</feature>
<feature type="binding site" evidence="3">
    <location>
        <position position="890"/>
    </location>
    <ligand>
        <name>Zn(2+)</name>
        <dbReference type="ChEBI" id="CHEBI:29105"/>
        <label>2</label>
    </ligand>
</feature>
<feature type="modified residue" description="Phosphoserine" evidence="2">
    <location>
        <position position="334"/>
    </location>
</feature>
<feature type="modified residue" description="Phosphothreonine" evidence="2">
    <location>
        <position position="512"/>
    </location>
</feature>
<feature type="modified residue" description="Phosphothreonine; by MAP2K" evidence="2">
    <location>
        <position position="888"/>
    </location>
</feature>
<feature type="cross-link" description="Glycyl lysine isopeptide (Lys-Gly) (interchain with G-Cter in ubiquitin)" evidence="2">
    <location>
        <position position="87"/>
    </location>
</feature>
<organism>
    <name type="scientific">Mus musculus</name>
    <name type="common">Mouse</name>
    <dbReference type="NCBI Taxonomy" id="10090"/>
    <lineage>
        <taxon>Eukaryota</taxon>
        <taxon>Metazoa</taxon>
        <taxon>Chordata</taxon>
        <taxon>Craniata</taxon>
        <taxon>Vertebrata</taxon>
        <taxon>Euteleostomi</taxon>
        <taxon>Mammalia</taxon>
        <taxon>Eutheria</taxon>
        <taxon>Euarchontoglires</taxon>
        <taxon>Glires</taxon>
        <taxon>Rodentia</taxon>
        <taxon>Myomorpha</taxon>
        <taxon>Muroidea</taxon>
        <taxon>Muridae</taxon>
        <taxon>Murinae</taxon>
        <taxon>Mus</taxon>
        <taxon>Mus</taxon>
    </lineage>
</organism>
<protein>
    <recommendedName>
        <fullName>Lateral signaling target protein 2 homolog</fullName>
    </recommendedName>
    <alternativeName>
        <fullName>Zinc finger FYVE domain-containing protein 28</fullName>
    </alternativeName>
</protein>
<dbReference type="EMBL" id="AK129414">
    <property type="protein sequence ID" value="BAC98224.1"/>
    <property type="status" value="ALT_INIT"/>
    <property type="molecule type" value="mRNA"/>
</dbReference>
<dbReference type="EMBL" id="BC139050">
    <property type="protein sequence ID" value="AAI39051.1"/>
    <property type="molecule type" value="mRNA"/>
</dbReference>
<dbReference type="EMBL" id="BC139051">
    <property type="protein sequence ID" value="AAI39052.1"/>
    <property type="molecule type" value="mRNA"/>
</dbReference>
<dbReference type="CCDS" id="CCDS39068.1"/>
<dbReference type="RefSeq" id="NP_001015039.1">
    <property type="nucleotide sequence ID" value="NM_001015039.1"/>
</dbReference>
<dbReference type="SMR" id="Q6ZPK7"/>
<dbReference type="FunCoup" id="Q6ZPK7">
    <property type="interactions" value="843"/>
</dbReference>
<dbReference type="STRING" id="10090.ENSMUSP00000092464"/>
<dbReference type="GlyGen" id="Q6ZPK7">
    <property type="glycosylation" value="1 site"/>
</dbReference>
<dbReference type="iPTMnet" id="Q6ZPK7"/>
<dbReference type="PhosphoSitePlus" id="Q6ZPK7"/>
<dbReference type="jPOST" id="Q6ZPK7"/>
<dbReference type="PaxDb" id="10090-ENSMUSP00000092464"/>
<dbReference type="ProteomicsDB" id="252681"/>
<dbReference type="Antibodypedia" id="22351">
    <property type="antibodies" value="91 antibodies from 19 providers"/>
</dbReference>
<dbReference type="DNASU" id="231125"/>
<dbReference type="Ensembl" id="ENSMUST00000094868.10">
    <property type="protein sequence ID" value="ENSMUSP00000092464.4"/>
    <property type="gene ID" value="ENSMUSG00000037224.16"/>
</dbReference>
<dbReference type="GeneID" id="231125"/>
<dbReference type="KEGG" id="mmu:231125"/>
<dbReference type="UCSC" id="uc008xca.1">
    <property type="organism name" value="mouse"/>
</dbReference>
<dbReference type="AGR" id="MGI:2684992"/>
<dbReference type="CTD" id="57732"/>
<dbReference type="MGI" id="MGI:2684992">
    <property type="gene designation" value="Zfyve28"/>
</dbReference>
<dbReference type="VEuPathDB" id="HostDB:ENSMUSG00000037224"/>
<dbReference type="eggNOG" id="KOG1819">
    <property type="taxonomic scope" value="Eukaryota"/>
</dbReference>
<dbReference type="GeneTree" id="ENSGT00940000157217"/>
<dbReference type="HOGENOM" id="CLU_007360_1_0_1"/>
<dbReference type="InParanoid" id="Q6ZPK7"/>
<dbReference type="OMA" id="INPFSPC"/>
<dbReference type="OrthoDB" id="20035at2759"/>
<dbReference type="PhylomeDB" id="Q6ZPK7"/>
<dbReference type="TreeFam" id="TF320752"/>
<dbReference type="BioGRID-ORCS" id="231125">
    <property type="hits" value="4 hits in 76 CRISPR screens"/>
</dbReference>
<dbReference type="ChiTaRS" id="Zfyve28">
    <property type="organism name" value="mouse"/>
</dbReference>
<dbReference type="PRO" id="PR:Q6ZPK7"/>
<dbReference type="Proteomes" id="UP000000589">
    <property type="component" value="Chromosome 5"/>
</dbReference>
<dbReference type="RNAct" id="Q6ZPK7">
    <property type="molecule type" value="protein"/>
</dbReference>
<dbReference type="Bgee" id="ENSMUSG00000037224">
    <property type="expression patterns" value="Expressed in retinal neural layer and 109 other cell types or tissues"/>
</dbReference>
<dbReference type="ExpressionAtlas" id="Q6ZPK7">
    <property type="expression patterns" value="baseline and differential"/>
</dbReference>
<dbReference type="GO" id="GO:0005829">
    <property type="term" value="C:cytosol"/>
    <property type="evidence" value="ECO:0000250"/>
    <property type="project" value="UniProtKB"/>
</dbReference>
<dbReference type="GO" id="GO:0031901">
    <property type="term" value="C:early endosome membrane"/>
    <property type="evidence" value="ECO:0000250"/>
    <property type="project" value="UniProtKB"/>
</dbReference>
<dbReference type="GO" id="GO:0032266">
    <property type="term" value="F:phosphatidylinositol-3-phosphate binding"/>
    <property type="evidence" value="ECO:0000250"/>
    <property type="project" value="UniProtKB"/>
</dbReference>
<dbReference type="GO" id="GO:0008270">
    <property type="term" value="F:zinc ion binding"/>
    <property type="evidence" value="ECO:0007669"/>
    <property type="project" value="UniProtKB-KW"/>
</dbReference>
<dbReference type="GO" id="GO:0042059">
    <property type="term" value="P:negative regulation of epidermal growth factor receptor signaling pathway"/>
    <property type="evidence" value="ECO:0000250"/>
    <property type="project" value="UniProtKB"/>
</dbReference>
<dbReference type="GO" id="GO:0007175">
    <property type="term" value="P:negative regulation of epidermal growth factor-activated receptor activity"/>
    <property type="evidence" value="ECO:0000250"/>
    <property type="project" value="UniProtKB"/>
</dbReference>
<dbReference type="CDD" id="cd15731">
    <property type="entry name" value="FYVE_LST2"/>
    <property type="match status" value="1"/>
</dbReference>
<dbReference type="FunFam" id="3.30.40.10:FF:000092">
    <property type="entry name" value="Lateral signaling target protein 2 homolog"/>
    <property type="match status" value="1"/>
</dbReference>
<dbReference type="Gene3D" id="3.30.40.10">
    <property type="entry name" value="Zinc/RING finger domain, C3HC4 (zinc finger)"/>
    <property type="match status" value="1"/>
</dbReference>
<dbReference type="InterPro" id="IPR043269">
    <property type="entry name" value="FYVE_LST2"/>
</dbReference>
<dbReference type="InterPro" id="IPR051118">
    <property type="entry name" value="LST-2"/>
</dbReference>
<dbReference type="InterPro" id="IPR000306">
    <property type="entry name" value="Znf_FYVE"/>
</dbReference>
<dbReference type="InterPro" id="IPR017455">
    <property type="entry name" value="Znf_FYVE-rel"/>
</dbReference>
<dbReference type="InterPro" id="IPR011011">
    <property type="entry name" value="Znf_FYVE_PHD"/>
</dbReference>
<dbReference type="InterPro" id="IPR013083">
    <property type="entry name" value="Znf_RING/FYVE/PHD"/>
</dbReference>
<dbReference type="PANTHER" id="PTHR46465">
    <property type="entry name" value="LATERAL SIGNALING TARGET PROTEIN 2 HOMOLOG"/>
    <property type="match status" value="1"/>
</dbReference>
<dbReference type="PANTHER" id="PTHR46465:SF3">
    <property type="entry name" value="LATERAL SIGNALING TARGET PROTEIN 2 HOMOLOG"/>
    <property type="match status" value="1"/>
</dbReference>
<dbReference type="Pfam" id="PF01363">
    <property type="entry name" value="FYVE"/>
    <property type="match status" value="1"/>
</dbReference>
<dbReference type="SMART" id="SM00064">
    <property type="entry name" value="FYVE"/>
    <property type="match status" value="1"/>
</dbReference>
<dbReference type="SUPFAM" id="SSF57903">
    <property type="entry name" value="FYVE/PHD zinc finger"/>
    <property type="match status" value="1"/>
</dbReference>
<dbReference type="PROSITE" id="PS50178">
    <property type="entry name" value="ZF_FYVE"/>
    <property type="match status" value="1"/>
</dbReference>
<keyword id="KW-0963">Cytoplasm</keyword>
<keyword id="KW-0967">Endosome</keyword>
<keyword id="KW-1017">Isopeptide bond</keyword>
<keyword id="KW-0472">Membrane</keyword>
<keyword id="KW-0479">Metal-binding</keyword>
<keyword id="KW-0597">Phosphoprotein</keyword>
<keyword id="KW-1185">Reference proteome</keyword>
<keyword id="KW-0832">Ubl conjugation</keyword>
<keyword id="KW-0862">Zinc</keyword>
<keyword id="KW-0863">Zinc-finger</keyword>
<proteinExistence type="evidence at protein level"/>
<sequence length="905" mass="99787">MMNRFRKWLYKPKRSDPQLLAQFYYADEELNQVAAELDSLDGRKEPQRCTLLVSQFRSCQDNVLNIINQIMEECIPQDRAPRDFCVKFPEEIRHDNLAGQLWFGAECLAAGSIIMNRELESMAMRPLAKELTRSLEDVRGTLRDQALRDLNTYTEKMREALRRFDVLFAEFELSYVSAMVPVKSPREYYVQQEVIVLFCETVERALDFGYLTQDMIDDYEPALMFTIPRLAIVCGLVVYADGPLNLDRKVEDMSELFRPFHTLLRKIRDLLQALTEEELHTLERSLCVSQDVELPIRADTQAPSALAPTFSASLPPEETLSASANNPEAELACSMQYDDQELEELSRMVHRAGDEMSSLLSPPSACQSPAHRPGSEASPRGEASPARARLKSGSDEEERVFFMDDVEVTESPARPESPGNTFELTQGNAQQRGQDGQSGEVGVEAPALVKEEDWSNNNVEGDKIKLASLMGSTSCSCLDSQLYLDGWEVSAEDAETAEMIAHRTGGMKLSATVIFNPKSPTSQDSAVAAQEAPGHGTSPLEPRAEGTGDNSHKLSTTATNCLLHSCVCCGSCGDSRDDAVERLREKCGPGSVISASNPSVSLAKGGDKEPERIDEAQPSDVTLPAEDASNRQEPKAPASSKCLAHTSGPQVDTASRLQGEGEVKGQPEPEARKQDPEKSPVVSGDSPRGDVAQTEHQHLLGSSSTVGSCSLDNTRLDVATAAMPVTPMATREKIRSRFHGSHDLIHRLFVCISGVADQLQTNYASDLRSILKTLFEVMATKPETDDKEKLKKVTQTLRSAALEDCALCQETVSSSELAAKTRDGDFEDPPEWVPDEACGFCTSCKAPFTVIRRKHHCRSCGKIFCSRCSSHSAPLPRYGQVKPVRVCTHCYMFHVTPFYSDKTGM</sequence>
<evidence type="ECO:0000250" key="1"/>
<evidence type="ECO:0000250" key="2">
    <source>
        <dbReference type="UniProtKB" id="Q9HCC9"/>
    </source>
</evidence>
<evidence type="ECO:0000255" key="3">
    <source>
        <dbReference type="PROSITE-ProRule" id="PRU00091"/>
    </source>
</evidence>
<evidence type="ECO:0000256" key="4">
    <source>
        <dbReference type="SAM" id="MobiDB-lite"/>
    </source>
</evidence>
<evidence type="ECO:0000269" key="5">
    <source>
    </source>
</evidence>
<evidence type="ECO:0000305" key="6"/>
<accession>Q6ZPK7</accession>
<accession>B2RSX8</accession>
<reference key="1">
    <citation type="journal article" date="2003" name="DNA Res.">
        <title>Prediction of the coding sequences of mouse homologues of KIAA gene: III. The complete nucleotide sequences of 500 mouse KIAA-homologous cDNAs identified by screening of terminal sequences of cDNA clones randomly sampled from size-fractionated libraries.</title>
        <authorList>
            <person name="Okazaki N."/>
            <person name="Kikuno R."/>
            <person name="Ohara R."/>
            <person name="Inamoto S."/>
            <person name="Koseki H."/>
            <person name="Hiraoka S."/>
            <person name="Saga Y."/>
            <person name="Nagase T."/>
            <person name="Ohara O."/>
            <person name="Koga H."/>
        </authorList>
    </citation>
    <scope>NUCLEOTIDE SEQUENCE [LARGE SCALE MRNA]</scope>
    <source>
        <tissue>Brain</tissue>
    </source>
</reference>
<reference key="2">
    <citation type="journal article" date="2004" name="Genome Res.">
        <title>The status, quality, and expansion of the NIH full-length cDNA project: the Mammalian Gene Collection (MGC).</title>
        <authorList>
            <consortium name="The MGC Project Team"/>
        </authorList>
    </citation>
    <scope>NUCLEOTIDE SEQUENCE [LARGE SCALE MRNA]</scope>
    <source>
        <tissue>Brain</tissue>
    </source>
</reference>
<reference key="3">
    <citation type="journal article" date="2009" name="Dev. Cell">
        <title>Monoubiquitinylation regulates endosomal localization of Lst2, a negative regulator of EGF receptor signaling.</title>
        <authorList>
            <person name="Mosesson Y."/>
            <person name="Chetrit D."/>
            <person name="Schley L."/>
            <person name="Berghoff J."/>
            <person name="Ziv T."/>
            <person name="Carvalho S."/>
            <person name="Milanezi F."/>
            <person name="Admon A."/>
            <person name="Schmitt F."/>
            <person name="Ehrlich M."/>
            <person name="Yarden Y."/>
        </authorList>
    </citation>
    <scope>TISSUE SPECIFICITY</scope>
</reference>
<gene>
    <name type="primary">Zfyve28</name>
    <name type="synonym">Kiaa1643</name>
    <name type="synonym">Lst2</name>
</gene>
<comment type="function">
    <text evidence="1">Negative regulator of epidermal growth factor receptor (EGFR) signaling. Acts by promoting EGFR degradation in endosomes when not monoubiquitinated (By similarity).</text>
</comment>
<comment type="subunit">
    <text evidence="1">Interacts with TRIM3.</text>
</comment>
<comment type="subcellular location">
    <subcellularLocation>
        <location>Cytoplasm</location>
        <location>Cytosol</location>
    </subcellularLocation>
    <subcellularLocation>
        <location>Early endosome membrane</location>
    </subcellularLocation>
    <text evidence="1">Localizes to early endosome membrane in absence of Lys-87 monoubiquitination. Localizes to cytosol when monoubiquitinated (By similarity).</text>
</comment>
<comment type="tissue specificity">
    <text evidence="5">Enriched in brain (at protein level).</text>
</comment>
<comment type="domain">
    <text evidence="1">The FYVE-type zinc finger mediates the interaction with phosphatidylinositol 3-phosphate (PI3P) and localization to early endosome membranes when not monoubiquitinated at Lys-87.</text>
</comment>
<comment type="PTM">
    <text evidence="1">Monoubiquitination at Lys-87 prevents binding to phosphatidylinositol 3-phosphate (PI3P) and localization to early endosome membranes.</text>
</comment>
<comment type="similarity">
    <text evidence="6">Belongs to the lst-2 family.</text>
</comment>
<comment type="sequence caution" evidence="6">
    <conflict type="erroneous initiation">
        <sequence resource="EMBL-CDS" id="BAC98224"/>
    </conflict>
</comment>